<evidence type="ECO:0000255" key="1">
    <source>
        <dbReference type="HAMAP-Rule" id="MF_01330"/>
    </source>
</evidence>
<evidence type="ECO:0007829" key="2">
    <source>
        <dbReference type="PDB" id="8XKU"/>
    </source>
</evidence>
<evidence type="ECO:0007829" key="3">
    <source>
        <dbReference type="PDB" id="8XKV"/>
    </source>
</evidence>
<gene>
    <name evidence="1" type="primary">ycf2-A</name>
    <name type="synonym">ycf2-1</name>
    <name type="ordered locus">AtCg00860</name>
</gene>
<gene>
    <name evidence="1" type="primary">ycf2-B</name>
    <name type="synonym">ycf2-2</name>
    <name type="ordered locus">AtCg01280</name>
</gene>
<sequence>MKGHQFKSWIFELREIVREIKNAHYFLDSWTQFNSVGSFIHIFFHQERFRKLLDPRIFSILLLRNSQGSTSNRYFTIKGVVLFVVAALLYRINNRNMVESKNLYLKGLLPIPMNSIGPRNDTSEESFGSCNINRLIVSLLYLTKGKKISESCFRDPKESTWVLPITQKCIMPESNWSSRWWRNWIGKKRGFCCKISNETVAGIDISFKEKDIKYLEFLFVYYMDDPIRKGHDWELFDRLSPSKRRNIINLNSGQLFEILVKDWICYLMFAFREKIPIEVEGFCKQQGAGSTIQSNDIEHVSHLFSRNKWAISLQNCAQFHMWQFHQDLFVSWGKNPHESDFFRKISRENWIWLDNVWLVNKDRFFSKVRNVSSNIQYDSTRSSFVQVTDSSQLNGSSDQFIDPFDSISNEDSEYHYHTLINQREIQQLKERSILLDPSFIQTEGREIESDRFPKYLSGYSSMPRLFTEREKRMNNHLLPEESEEFLGNPTRAIRSFFSDRWSELHLGSNPTERSTRDQKLLKKEQDVSFVPSRRSENKEIVNIFKIITYLQNTVSIHPISSDLGCDMVPKDELDMDSSNKISFLNKNPFFDLFHLFHERKRGGYTLRHESEERFQEMADLFTLSITEPDLVYHKGFAFSIDSYGLDQRQFLKEVFNFRDESKKKSLLVLPPIFYEENESFYRRLRKIWVRISCGNYLEDQKRVVFASNNIMEAVNQYRLIRNMIQIQFQYSPYGYIRNVLNRFFLMKRPDRNFEYGIQRDLIGNDTLNHRTIMKDTINQHLSNLKKSQKKWFDPLIFLSQTERSINRDPNAYRYKWSNGSKNFQEHLEHFVSERKSRFQVVFDQLCINQYSIDWSEVIDKKDLSKSLRFFLSKLLRFFLSKLLLFLSKLLLFLSNSLPFFFVSFENIPIHRSEIHIYELKGPNDQLCNQLLESIGLQIVHLKKLKPFLLDDHNTSQKSKFLINGGTISPFLFNKIPKWMIDSFHTRKNRRKSFDNTDSAYFSIVSHDQDNWLNPVKPFQRSSLISSFSKANRLRFLNNPHHFCFYCNKRFPFYVEKARLNNSDFTFTYGQFLTILFIHNKTFSSCGGKKKHAFLERDTISPSSIESQVSNIFISNDFPQSGDERYNLYKSFHFPIRSDPLVRRAIYSIADISGTPLIEGQRVNFERTYCQTLSDMNLSDSEEKSLHQYLNFNSNMGLIHTPCSEKYLQRKKRSLCLKKCVDKGQMDRTFQRDSAFSTLSKWNLFQTYMPWFFTSTGYKYLNLIFLDTFSDLLRILSSSQKFVSIFHDIMHGLDISWRILQKKLCLPQRNLISEISSKSLHNLLLSEEMIHRNNESSLISTHLRSPNVREVLYSILFLLLVAGYIVRTHLLFVSRAYSELQTEFEKIKSLMIPSYMIELRKLLDRYPTSELNSFWLKNLFLVALEQLGDCLEEIRGSGGNMLWGGDPAYGVKSIRSKKKDLKINFIDIIDLISIIPNPINRITFSRNTRHLSHTSKEIYSLIRKRKNVSGDWIDDKIESWVANSDSIDDKEREFLVQFSTLRAEKRIDQILLSLTHSDHLSKNDSGYQMIEQPGTIYLRYLVDIHKKYLMNYEFNTSCLAERRIFLAHYQTITYSQTSCGANSFHFPSHGKPFSLRLALSPSRSILVIGSIGTGRSYLVKYLATNSYVPFITVFLNKFLDNKPKGFFIDDIDIDDSDDIDASNDIDRELDTELELLTMMNALTMDMMLEIDRFYITLQFELAKAMSPCIIWIPNIHDLDVNESSYLALGLLVNSLSRDCERCSTRNILVIASTHIPQKVDPALIAPNKLNTCIKIRRLLIPQQRKHFFTLSYTRGFHLEKKMFHTNGFESITMGSSARDLVALTNEALSISITQKKSIIDTNTIRSALHRQTWDLRSQVRSVQDHGILFYQIGRAVAQNVLISNCPIDPISIYMKKKSCNEGDSYLYKWYFELGTSMKKFTILLYLLSCSAGSVAQDLWSLPVPDEKNRITSYGFVENDSDLVHGLLEVQGALVGSSRTEKDCSQFDNDRVTLLFRSEPRDPLYMMQDGSCSIVDQRFLYEKYESEFEEGEGEGVLDPQQIEEDLFNHIVWAPRIWRPRGFLFDCIERPNELGFPYSAGSFRGKRIIYDEKYELQENDSEFLQSGTMQYQRRDRSSKEQGFFRISQFIWDPADPLFFLFKDQPFVSVFSHREFFADEEMSKGLLTSQTDPPTSIYKRWFIKNTQEKHFELLIQRQRWLRTNSSLSNGFFRSNTRSESYQYLSNLFISNGTLLDRMTKTLLKKRWLFSDEMKIGFM</sequence>
<keyword id="KW-0002">3D-structure</keyword>
<keyword id="KW-0067">ATP-binding</keyword>
<keyword id="KW-0150">Chloroplast</keyword>
<keyword id="KW-0547">Nucleotide-binding</keyword>
<keyword id="KW-0934">Plastid</keyword>
<keyword id="KW-1185">Reference proteome</keyword>
<feature type="chain" id="PRO_0000223049" description="Protein Ycf2">
    <location>
        <begin position="1"/>
        <end position="2294"/>
    </location>
</feature>
<feature type="binding site" evidence="1">
    <location>
        <begin position="1648"/>
        <end position="1655"/>
    </location>
    <ligand>
        <name>ATP</name>
        <dbReference type="ChEBI" id="CHEBI:30616"/>
    </ligand>
</feature>
<feature type="helix" evidence="2">
    <location>
        <begin position="6"/>
        <end position="20"/>
    </location>
</feature>
<feature type="turn" evidence="2">
    <location>
        <begin position="21"/>
        <end position="23"/>
    </location>
</feature>
<feature type="helix" evidence="2">
    <location>
        <begin position="28"/>
        <end position="44"/>
    </location>
</feature>
<feature type="helix" evidence="2">
    <location>
        <begin position="46"/>
        <end position="49"/>
    </location>
</feature>
<feature type="helix" evidence="2">
    <location>
        <begin position="50"/>
        <end position="52"/>
    </location>
</feature>
<feature type="helix" evidence="2">
    <location>
        <begin position="55"/>
        <end position="62"/>
    </location>
</feature>
<feature type="helix" evidence="2">
    <location>
        <begin position="74"/>
        <end position="92"/>
    </location>
</feature>
<feature type="strand" evidence="3">
    <location>
        <begin position="95"/>
        <end position="97"/>
    </location>
</feature>
<feature type="helix" evidence="2">
    <location>
        <begin position="103"/>
        <end position="106"/>
    </location>
</feature>
<feature type="helix" evidence="2">
    <location>
        <begin position="134"/>
        <end position="140"/>
    </location>
</feature>
<feature type="helix" evidence="2">
    <location>
        <begin position="499"/>
        <end position="505"/>
    </location>
</feature>
<feature type="strand" evidence="3">
    <location>
        <begin position="507"/>
        <end position="510"/>
    </location>
</feature>
<feature type="helix" evidence="2">
    <location>
        <begin position="530"/>
        <end position="553"/>
    </location>
</feature>
<feature type="strand" evidence="2">
    <location>
        <begin position="555"/>
        <end position="557"/>
    </location>
</feature>
<feature type="helix" evidence="2">
    <location>
        <begin position="1016"/>
        <end position="1018"/>
    </location>
</feature>
<feature type="strand" evidence="2">
    <location>
        <begin position="1019"/>
        <end position="1021"/>
    </location>
</feature>
<feature type="helix" evidence="2">
    <location>
        <begin position="1023"/>
        <end position="1033"/>
    </location>
</feature>
<feature type="strand" evidence="2">
    <location>
        <begin position="1053"/>
        <end position="1055"/>
    </location>
</feature>
<feature type="helix" evidence="2">
    <location>
        <begin position="1313"/>
        <end position="1319"/>
    </location>
</feature>
<feature type="helix" evidence="2">
    <location>
        <begin position="1345"/>
        <end position="1385"/>
    </location>
</feature>
<feature type="helix" evidence="2">
    <location>
        <begin position="1532"/>
        <end position="1537"/>
    </location>
</feature>
<feature type="strand" evidence="2">
    <location>
        <begin position="1539"/>
        <end position="1542"/>
    </location>
</feature>
<feature type="helix" evidence="2">
    <location>
        <begin position="1546"/>
        <end position="1553"/>
    </location>
</feature>
<feature type="strand" evidence="2">
    <location>
        <begin position="1563"/>
        <end position="1565"/>
    </location>
</feature>
<feature type="strand" evidence="2">
    <location>
        <begin position="1568"/>
        <end position="1570"/>
    </location>
</feature>
<feature type="helix" evidence="2">
    <location>
        <begin position="1573"/>
        <end position="1585"/>
    </location>
</feature>
<feature type="strand" evidence="2">
    <location>
        <begin position="1589"/>
        <end position="1591"/>
    </location>
</feature>
<feature type="helix" evidence="2">
    <location>
        <begin position="1599"/>
        <end position="1612"/>
    </location>
</feature>
<feature type="strand" evidence="2">
    <location>
        <begin position="1642"/>
        <end position="1647"/>
    </location>
</feature>
<feature type="helix" evidence="2">
    <location>
        <begin position="1655"/>
        <end position="1662"/>
    </location>
</feature>
<feature type="turn" evidence="2">
    <location>
        <begin position="1663"/>
        <end position="1665"/>
    </location>
</feature>
<feature type="strand" evidence="2">
    <location>
        <begin position="1669"/>
        <end position="1671"/>
    </location>
</feature>
<feature type="helix" evidence="2">
    <location>
        <begin position="1674"/>
        <end position="1677"/>
    </location>
</feature>
<feature type="turn" evidence="2">
    <location>
        <begin position="1678"/>
        <end position="1680"/>
    </location>
</feature>
<feature type="helix" evidence="2">
    <location>
        <begin position="1725"/>
        <end position="1743"/>
    </location>
</feature>
<feature type="strand" evidence="2">
    <location>
        <begin position="1748"/>
        <end position="1752"/>
    </location>
</feature>
<feature type="helix" evidence="2">
    <location>
        <begin position="1754"/>
        <end position="1756"/>
    </location>
</feature>
<feature type="helix" evidence="2">
    <location>
        <begin position="1764"/>
        <end position="1776"/>
    </location>
</feature>
<feature type="turn" evidence="2">
    <location>
        <begin position="1777"/>
        <end position="1779"/>
    </location>
</feature>
<feature type="strand" evidence="2">
    <location>
        <begin position="1780"/>
        <end position="1782"/>
    </location>
</feature>
<feature type="strand" evidence="2">
    <location>
        <begin position="1790"/>
        <end position="1793"/>
    </location>
</feature>
<feature type="helix" evidence="2">
    <location>
        <begin position="1800"/>
        <end position="1802"/>
    </location>
</feature>
<feature type="strand" evidence="2">
    <location>
        <begin position="1805"/>
        <end position="1812"/>
    </location>
</feature>
<feature type="helix" evidence="2">
    <location>
        <begin position="1819"/>
        <end position="1831"/>
    </location>
</feature>
<feature type="turn" evidence="2">
    <location>
        <begin position="1832"/>
        <end position="1834"/>
    </location>
</feature>
<feature type="strand" evidence="2">
    <location>
        <begin position="1841"/>
        <end position="1846"/>
    </location>
</feature>
<feature type="helix" evidence="2">
    <location>
        <begin position="1847"/>
        <end position="1849"/>
    </location>
</feature>
<feature type="helix" evidence="2">
    <location>
        <begin position="1858"/>
        <end position="1872"/>
    </location>
</feature>
<feature type="strand" evidence="2">
    <location>
        <begin position="1876"/>
        <end position="1878"/>
    </location>
</feature>
<feature type="helix" evidence="2">
    <location>
        <begin position="1880"/>
        <end position="1888"/>
    </location>
</feature>
<feature type="strand" evidence="2">
    <location>
        <begin position="1894"/>
        <end position="1897"/>
    </location>
</feature>
<feature type="helix" evidence="2">
    <location>
        <begin position="1906"/>
        <end position="1920"/>
    </location>
</feature>
<feature type="strand" evidence="2">
    <location>
        <begin position="1929"/>
        <end position="1932"/>
    </location>
</feature>
<feature type="helix" evidence="2">
    <location>
        <begin position="1945"/>
        <end position="1952"/>
    </location>
</feature>
<feature type="helix" evidence="2">
    <location>
        <begin position="1960"/>
        <end position="1967"/>
    </location>
</feature>
<feature type="helix" evidence="2">
    <location>
        <begin position="1970"/>
        <end position="1978"/>
    </location>
</feature>
<feature type="strand" evidence="2">
    <location>
        <begin position="1983"/>
        <end position="1985"/>
    </location>
</feature>
<feature type="helix" evidence="2">
    <location>
        <begin position="1993"/>
        <end position="2011"/>
    </location>
</feature>
<feature type="helix" evidence="2">
    <location>
        <begin position="2043"/>
        <end position="2058"/>
    </location>
</feature>
<feature type="strand" evidence="2">
    <location>
        <begin position="2222"/>
        <end position="2224"/>
    </location>
</feature>
<feature type="helix" evidence="2">
    <location>
        <begin position="2225"/>
        <end position="2239"/>
    </location>
</feature>
<feature type="helix" evidence="2">
    <location>
        <begin position="2248"/>
        <end position="2266"/>
    </location>
</feature>
<feature type="helix" evidence="2">
    <location>
        <begin position="2268"/>
        <end position="2280"/>
    </location>
</feature>
<feature type="strand" evidence="2">
    <location>
        <begin position="2281"/>
        <end position="2284"/>
    </location>
</feature>
<feature type="helix" evidence="2">
    <location>
        <begin position="2286"/>
        <end position="2292"/>
    </location>
</feature>
<organism>
    <name type="scientific">Arabidopsis thaliana</name>
    <name type="common">Mouse-ear cress</name>
    <dbReference type="NCBI Taxonomy" id="3702"/>
    <lineage>
        <taxon>Eukaryota</taxon>
        <taxon>Viridiplantae</taxon>
        <taxon>Streptophyta</taxon>
        <taxon>Embryophyta</taxon>
        <taxon>Tracheophyta</taxon>
        <taxon>Spermatophyta</taxon>
        <taxon>Magnoliopsida</taxon>
        <taxon>eudicotyledons</taxon>
        <taxon>Gunneridae</taxon>
        <taxon>Pentapetalae</taxon>
        <taxon>rosids</taxon>
        <taxon>malvids</taxon>
        <taxon>Brassicales</taxon>
        <taxon>Brassicaceae</taxon>
        <taxon>Camelineae</taxon>
        <taxon>Arabidopsis</taxon>
    </lineage>
</organism>
<geneLocation type="chloroplast"/>
<name>YCF2_ARATH</name>
<accession>P56786</accession>
<proteinExistence type="evidence at protein level"/>
<protein>
    <recommendedName>
        <fullName evidence="1">Protein Ycf2</fullName>
    </recommendedName>
</protein>
<dbReference type="EMBL" id="AP000423">
    <property type="protein sequence ID" value="BAA84428.1"/>
    <property type="molecule type" value="Genomic_DNA"/>
</dbReference>
<dbReference type="EMBL" id="AP000423">
    <property type="protein sequence ID" value="BAA84449.1"/>
    <property type="molecule type" value="Genomic_DNA"/>
</dbReference>
<dbReference type="PDB" id="8XKU">
    <property type="method" value="EM"/>
    <property type="resolution" value="3.20 A"/>
    <property type="chains" value="D=1-2294"/>
</dbReference>
<dbReference type="PDB" id="8XKV">
    <property type="method" value="EM"/>
    <property type="resolution" value="3.30 A"/>
    <property type="chains" value="D=1-2294"/>
</dbReference>
<dbReference type="PDBsum" id="8XKU"/>
<dbReference type="PDBsum" id="8XKV"/>
<dbReference type="EMDB" id="EMD-38425"/>
<dbReference type="EMDB" id="EMD-38428"/>
<dbReference type="SMR" id="P56786"/>
<dbReference type="FunCoup" id="P56786">
    <property type="interactions" value="10"/>
</dbReference>
<dbReference type="STRING" id="3702.P56786"/>
<dbReference type="iPTMnet" id="P56786"/>
<dbReference type="PaxDb" id="3702-ATCG00860.1"/>
<dbReference type="ProteomicsDB" id="228550"/>
<dbReference type="EnsemblPlants" id="ATCG00860.1">
    <property type="protein sequence ID" value="ATCG00860.1"/>
    <property type="gene ID" value="ATCG00860"/>
</dbReference>
<dbReference type="EnsemblPlants" id="ATCG01280.1">
    <property type="protein sequence ID" value="ATCG01280.1"/>
    <property type="gene ID" value="ATCG01280"/>
</dbReference>
<dbReference type="Gramene" id="ATCG00860.1">
    <property type="protein sequence ID" value="ATCG00860.1"/>
    <property type="gene ID" value="ATCG00860"/>
</dbReference>
<dbReference type="Gramene" id="ATCG01280.1">
    <property type="protein sequence ID" value="ATCG01280.1"/>
    <property type="gene ID" value="ATCG01280"/>
</dbReference>
<dbReference type="KEGG" id="ath:ArthCp066"/>
<dbReference type="KEGG" id="ath:ArthCp083"/>
<dbReference type="Araport" id="ATCG00860"/>
<dbReference type="Araport" id="ATCG01280"/>
<dbReference type="TAIR" id="ATCG00860">
    <property type="gene designation" value="YCF2.1"/>
</dbReference>
<dbReference type="TAIR" id="ATCG01280">
    <property type="gene designation" value="YCF2.2"/>
</dbReference>
<dbReference type="eggNOG" id="ENOG502QRDV">
    <property type="taxonomic scope" value="Eukaryota"/>
</dbReference>
<dbReference type="HOGENOM" id="CLU_235036_0_0_1"/>
<dbReference type="InParanoid" id="P56786"/>
<dbReference type="OMA" id="IMSESNW"/>
<dbReference type="PRO" id="PR:P56786"/>
<dbReference type="Proteomes" id="UP000006548">
    <property type="component" value="Chloroplast Pltd"/>
</dbReference>
<dbReference type="ExpressionAtlas" id="P56786">
    <property type="expression patterns" value="baseline and differential"/>
</dbReference>
<dbReference type="GO" id="GO:0009507">
    <property type="term" value="C:chloroplast"/>
    <property type="evidence" value="ECO:0007005"/>
    <property type="project" value="TAIR"/>
</dbReference>
<dbReference type="GO" id="GO:0009941">
    <property type="term" value="C:chloroplast envelope"/>
    <property type="evidence" value="ECO:0000314"/>
    <property type="project" value="TAIR"/>
</dbReference>
<dbReference type="GO" id="GO:0009570">
    <property type="term" value="C:chloroplast stroma"/>
    <property type="evidence" value="ECO:0007669"/>
    <property type="project" value="UniProtKB-SubCell"/>
</dbReference>
<dbReference type="GO" id="GO:0009536">
    <property type="term" value="C:plastid"/>
    <property type="evidence" value="ECO:0007005"/>
    <property type="project" value="TAIR"/>
</dbReference>
<dbReference type="GO" id="GO:0062091">
    <property type="term" value="C:Ycf2/FtsHi complex"/>
    <property type="evidence" value="ECO:0000314"/>
    <property type="project" value="TAIR"/>
</dbReference>
<dbReference type="GO" id="GO:0005524">
    <property type="term" value="F:ATP binding"/>
    <property type="evidence" value="ECO:0007669"/>
    <property type="project" value="UniProtKB-KW"/>
</dbReference>
<dbReference type="GO" id="GO:0016887">
    <property type="term" value="F:ATP hydrolysis activity"/>
    <property type="evidence" value="ECO:0007669"/>
    <property type="project" value="InterPro"/>
</dbReference>
<dbReference type="GO" id="GO:0016464">
    <property type="term" value="F:chloroplast protein-transporting ATPase activity"/>
    <property type="evidence" value="ECO:0000314"/>
    <property type="project" value="TAIR"/>
</dbReference>
<dbReference type="GO" id="GO:0045037">
    <property type="term" value="P:protein import into chloroplast stroma"/>
    <property type="evidence" value="ECO:0000314"/>
    <property type="project" value="UniProtKB"/>
</dbReference>
<dbReference type="CDD" id="cd19505">
    <property type="entry name" value="RecA-like_Ycf2"/>
    <property type="match status" value="1"/>
</dbReference>
<dbReference type="Gene3D" id="3.40.50.300">
    <property type="entry name" value="P-loop containing nucleotide triphosphate hydrolases"/>
    <property type="match status" value="1"/>
</dbReference>
<dbReference type="HAMAP" id="MF_01330">
    <property type="entry name" value="Ycf2"/>
    <property type="match status" value="1"/>
</dbReference>
<dbReference type="InterPro" id="IPR003593">
    <property type="entry name" value="AAA+_ATPase"/>
</dbReference>
<dbReference type="InterPro" id="IPR003959">
    <property type="entry name" value="ATPase_AAA_core"/>
</dbReference>
<dbReference type="InterPro" id="IPR027417">
    <property type="entry name" value="P-loop_NTPase"/>
</dbReference>
<dbReference type="InterPro" id="IPR008543">
    <property type="entry name" value="Uncharacterised_Ycf2"/>
</dbReference>
<dbReference type="InterPro" id="IPR056777">
    <property type="entry name" value="Ycf2_N"/>
</dbReference>
<dbReference type="PANTHER" id="PTHR33078:SF89">
    <property type="entry name" value="PROTEIN YCF2"/>
    <property type="match status" value="1"/>
</dbReference>
<dbReference type="PANTHER" id="PTHR33078">
    <property type="entry name" value="PROTEIN YCF2-RELATED"/>
    <property type="match status" value="1"/>
</dbReference>
<dbReference type="Pfam" id="PF00004">
    <property type="entry name" value="AAA"/>
    <property type="match status" value="1"/>
</dbReference>
<dbReference type="Pfam" id="PF05695">
    <property type="entry name" value="Ycf2"/>
    <property type="match status" value="1"/>
</dbReference>
<dbReference type="SMART" id="SM00382">
    <property type="entry name" value="AAA"/>
    <property type="match status" value="1"/>
</dbReference>
<dbReference type="SUPFAM" id="SSF52540">
    <property type="entry name" value="P-loop containing nucleoside triphosphate hydrolases"/>
    <property type="match status" value="1"/>
</dbReference>
<comment type="function">
    <text>Probable ATPase of unknown function. Its presence in a non-photosynthetic plant (Epifagus virginiana) and experiments in tobacco indicate that it has an essential function which is probably not related to photosynthesis.</text>
</comment>
<comment type="subcellular location">
    <subcellularLocation>
        <location evidence="1">Plastid</location>
        <location evidence="1">Chloroplast stroma</location>
    </subcellularLocation>
</comment>
<comment type="similarity">
    <text evidence="1">Belongs to the Ycf2 family.</text>
</comment>
<reference key="1">
    <citation type="journal article" date="1999" name="DNA Res.">
        <title>Complete structure of the chloroplast genome of Arabidopsis thaliana.</title>
        <authorList>
            <person name="Sato S."/>
            <person name="Nakamura Y."/>
            <person name="Kaneko T."/>
            <person name="Asamizu E."/>
            <person name="Tabata S."/>
        </authorList>
    </citation>
    <scope>NUCLEOTIDE SEQUENCE [LARGE SCALE GENOMIC DNA]</scope>
    <source>
        <strain>cv. Columbia</strain>
    </source>
</reference>